<evidence type="ECO:0000255" key="1">
    <source>
        <dbReference type="HAMAP-Rule" id="MF_00758"/>
    </source>
</evidence>
<feature type="chain" id="PRO_1000046658" description="UPF0301 protein FTW_0891">
    <location>
        <begin position="1"/>
        <end position="194"/>
    </location>
</feature>
<dbReference type="EMBL" id="CP000608">
    <property type="protein sequence ID" value="ABO46738.1"/>
    <property type="molecule type" value="Genomic_DNA"/>
</dbReference>
<dbReference type="RefSeq" id="WP_003021066.1">
    <property type="nucleotide sequence ID" value="NC_009257.1"/>
</dbReference>
<dbReference type="SMR" id="A4IXT7"/>
<dbReference type="KEGG" id="ftw:FTW_0891"/>
<dbReference type="HOGENOM" id="CLU_057596_1_0_6"/>
<dbReference type="GO" id="GO:0005829">
    <property type="term" value="C:cytosol"/>
    <property type="evidence" value="ECO:0007669"/>
    <property type="project" value="TreeGrafter"/>
</dbReference>
<dbReference type="Gene3D" id="3.40.1740.10">
    <property type="entry name" value="VC0467-like"/>
    <property type="match status" value="1"/>
</dbReference>
<dbReference type="Gene3D" id="3.30.70.1300">
    <property type="entry name" value="VC0467-like domains"/>
    <property type="match status" value="1"/>
</dbReference>
<dbReference type="HAMAP" id="MF_00758">
    <property type="entry name" value="UPF0301"/>
    <property type="match status" value="1"/>
</dbReference>
<dbReference type="InterPro" id="IPR003774">
    <property type="entry name" value="AlgH-like"/>
</dbReference>
<dbReference type="PANTHER" id="PTHR30327">
    <property type="entry name" value="UNCHARACTERIZED PROTEIN YQGE"/>
    <property type="match status" value="1"/>
</dbReference>
<dbReference type="PANTHER" id="PTHR30327:SF1">
    <property type="entry name" value="UPF0301 PROTEIN YQGE"/>
    <property type="match status" value="1"/>
</dbReference>
<dbReference type="Pfam" id="PF02622">
    <property type="entry name" value="DUF179"/>
    <property type="match status" value="1"/>
</dbReference>
<dbReference type="SUPFAM" id="SSF143456">
    <property type="entry name" value="VC0467-like"/>
    <property type="match status" value="1"/>
</dbReference>
<proteinExistence type="inferred from homology"/>
<reference key="1">
    <citation type="journal article" date="2007" name="PLoS ONE">
        <title>Complete genomic characterization of a pathogenic A.II strain of Francisella tularensis subspecies tularensis.</title>
        <authorList>
            <person name="Beckstrom-Sternberg S.M."/>
            <person name="Auerbach R.K."/>
            <person name="Godbole S."/>
            <person name="Pearson J.V."/>
            <person name="Beckstrom-Sternberg J.S."/>
            <person name="Deng Z."/>
            <person name="Munk C."/>
            <person name="Kubota K."/>
            <person name="Zhou Y."/>
            <person name="Bruce D."/>
            <person name="Noronha J."/>
            <person name="Scheuermann R.H."/>
            <person name="Wang A."/>
            <person name="Wei X."/>
            <person name="Wang J."/>
            <person name="Hao J."/>
            <person name="Wagner D.M."/>
            <person name="Brettin T.S."/>
            <person name="Brown N."/>
            <person name="Gilna P."/>
            <person name="Keim P.S."/>
        </authorList>
    </citation>
    <scope>NUCLEOTIDE SEQUENCE [LARGE SCALE GENOMIC DNA]</scope>
    <source>
        <strain>WY96-3418</strain>
    </source>
</reference>
<gene>
    <name type="ordered locus">FTW_0891</name>
</gene>
<name>Y891_FRATW</name>
<protein>
    <recommendedName>
        <fullName evidence="1">UPF0301 protein FTW_0891</fullName>
    </recommendedName>
</protein>
<accession>A4IXT7</accession>
<comment type="similarity">
    <text evidence="1">Belongs to the UPF0301 (AlgH) family.</text>
</comment>
<organism>
    <name type="scientific">Francisella tularensis subsp. tularensis (strain WY96-3418)</name>
    <dbReference type="NCBI Taxonomy" id="418136"/>
    <lineage>
        <taxon>Bacteria</taxon>
        <taxon>Pseudomonadati</taxon>
        <taxon>Pseudomonadota</taxon>
        <taxon>Gammaproteobacteria</taxon>
        <taxon>Thiotrichales</taxon>
        <taxon>Francisellaceae</taxon>
        <taxon>Francisella</taxon>
    </lineage>
</organism>
<sequence>MYQNHKSEILLATPLIKDDIVFTKSVVYLCQNDRHGAMGLIINKPLADTLKDVFEELHIPHTNTFKEILEYPLYMGGPISPHKIMILHTTNGRNYTSTIKLDEGLAITASIDILEDIANNILPEYFLPVVGYSCWTANQLTDEIKSNDWIVTNKLNKKILFNHENKVKWQNHLEHAGYTLQSLDTLFNRNTGNC</sequence>